<accession>Q64287</accession>
<accession>Q60802</accession>
<protein>
    <recommendedName>
        <fullName>Interferon regulatory factor 4</fullName>
        <shortName>IRF-4</shortName>
    </recommendedName>
    <alternativeName>
        <fullName evidence="10">Lymphocyte-specific interferon regulatory factor</fullName>
        <shortName>LSIRF</shortName>
    </alternativeName>
    <alternativeName>
        <fullName>NF-EM5</fullName>
    </alternativeName>
    <alternativeName>
        <fullName>PU.1 interaction partner</fullName>
    </alternativeName>
    <alternativeName>
        <fullName evidence="11">Transcriptional activator PIP</fullName>
    </alternativeName>
</protein>
<sequence>MNLETGSRGSEFGMSAVSCGNGKLRQWLIDQIDSGKYPGLVWENEEKSVFRIPWKHAGKQDYNREEDAALFKAWALFKGKFREGIDKPDPPTWKTRLRCALNKSNDFEELVERSQLDISDPYKVYRIVPEGAKKGAKQLTLDDTQMAMGHPYPMTAPYGSLPAQQVHNYMMPPHDRSWRDYAPDQSHPEIPYQCPVTFGPRGHHWQGPSCENGCQVTGTFYACAPPESQAPGIPIEPSIRSAEALALSDCRLHICLYYRDILVKELTTTSPEGCRISHGHTYDVSNLDQVLFPYPDDNGQRKNIEKLLSHLERGLVLWMAPDGLYAKRLCQSRIYWDGPLALCSDRPNKLERDQTCKLFDTQQFLSELQVFAHHGRPAPRFQVTLCFGEEFPDPQRQRKLITAHVEPLLARQLYYFAQQNTGHFLRGYELPEHVTTPDYHRSLRHSSIQE</sequence>
<proteinExistence type="evidence at protein level"/>
<feature type="chain" id="PRO_0000154557" description="Interferon regulatory factor 4">
    <location>
        <begin position="1"/>
        <end position="450"/>
    </location>
</feature>
<feature type="DNA-binding region" description="IRF tryptophan pentad repeat" evidence="3">
    <location>
        <begin position="21"/>
        <end position="129"/>
    </location>
</feature>
<feature type="modified residue" description="Phosphoserine; by ROCK2" evidence="4">
    <location>
        <position position="446"/>
    </location>
</feature>
<feature type="modified residue" description="Phosphoserine; by ROCK2" evidence="4">
    <location>
        <position position="447"/>
    </location>
</feature>
<feature type="splice variant" id="VSP_002756" description="In isoform 2." evidence="12">
    <location>
        <position position="165"/>
    </location>
</feature>
<feature type="mutagenesis site" description="Mice show a severe defect in antibody production both at the steady state and after immunization with different types of antigens." evidence="9">
    <original>T</original>
    <variation>R</variation>
    <location>
        <position position="95"/>
    </location>
</feature>
<feature type="helix" evidence="13">
    <location>
        <begin position="241"/>
        <end position="248"/>
    </location>
</feature>
<feature type="strand" evidence="13">
    <location>
        <begin position="252"/>
        <end position="258"/>
    </location>
</feature>
<feature type="strand" evidence="13">
    <location>
        <begin position="261"/>
        <end position="267"/>
    </location>
</feature>
<feature type="strand" evidence="13">
    <location>
        <begin position="274"/>
        <end position="279"/>
    </location>
</feature>
<feature type="strand" evidence="13">
    <location>
        <begin position="286"/>
        <end position="291"/>
    </location>
</feature>
<feature type="strand" evidence="13">
    <location>
        <begin position="297"/>
        <end position="300"/>
    </location>
</feature>
<feature type="helix" evidence="13">
    <location>
        <begin position="301"/>
        <end position="308"/>
    </location>
</feature>
<feature type="strand" evidence="13">
    <location>
        <begin position="315"/>
        <end position="319"/>
    </location>
</feature>
<feature type="strand" evidence="13">
    <location>
        <begin position="321"/>
        <end position="328"/>
    </location>
</feature>
<feature type="strand" evidence="13">
    <location>
        <begin position="330"/>
        <end position="332"/>
    </location>
</feature>
<feature type="strand" evidence="13">
    <location>
        <begin position="334"/>
        <end position="338"/>
    </location>
</feature>
<feature type="strand" evidence="13">
    <location>
        <begin position="343"/>
        <end position="345"/>
    </location>
</feature>
<feature type="strand" evidence="13">
    <location>
        <begin position="355"/>
        <end position="360"/>
    </location>
</feature>
<feature type="helix" evidence="13">
    <location>
        <begin position="361"/>
        <end position="374"/>
    </location>
</feature>
<feature type="strand" evidence="13">
    <location>
        <begin position="383"/>
        <end position="388"/>
    </location>
</feature>
<feature type="strand" evidence="13">
    <location>
        <begin position="400"/>
        <end position="407"/>
    </location>
</feature>
<feature type="helix" evidence="13">
    <location>
        <begin position="408"/>
        <end position="418"/>
    </location>
</feature>
<keyword id="KW-0002">3D-structure</keyword>
<keyword id="KW-0010">Activator</keyword>
<keyword id="KW-0025">Alternative splicing</keyword>
<keyword id="KW-0963">Cytoplasm</keyword>
<keyword id="KW-0903">Direct protein sequencing</keyword>
<keyword id="KW-0238">DNA-binding</keyword>
<keyword id="KW-0539">Nucleus</keyword>
<keyword id="KW-0597">Phosphoprotein</keyword>
<keyword id="KW-1185">Reference proteome</keyword>
<keyword id="KW-0804">Transcription</keyword>
<keyword id="KW-0805">Transcription regulation</keyword>
<name>IRF4_MOUSE</name>
<organism>
    <name type="scientific">Mus musculus</name>
    <name type="common">Mouse</name>
    <dbReference type="NCBI Taxonomy" id="10090"/>
    <lineage>
        <taxon>Eukaryota</taxon>
        <taxon>Metazoa</taxon>
        <taxon>Chordata</taxon>
        <taxon>Craniata</taxon>
        <taxon>Vertebrata</taxon>
        <taxon>Euteleostomi</taxon>
        <taxon>Mammalia</taxon>
        <taxon>Eutheria</taxon>
        <taxon>Euarchontoglires</taxon>
        <taxon>Glires</taxon>
        <taxon>Rodentia</taxon>
        <taxon>Myomorpha</taxon>
        <taxon>Muroidea</taxon>
        <taxon>Muridae</taxon>
        <taxon>Murinae</taxon>
        <taxon>Mus</taxon>
        <taxon>Mus</taxon>
    </lineage>
</organism>
<gene>
    <name evidence="2" type="primary">Irf4</name>
    <name evidence="11" type="synonym">Spip</name>
</gene>
<dbReference type="EMBL" id="U34307">
    <property type="protein sequence ID" value="AAA75283.1"/>
    <property type="molecule type" value="mRNA"/>
</dbReference>
<dbReference type="EMBL" id="U11692">
    <property type="protein sequence ID" value="AAA75309.1"/>
    <property type="molecule type" value="mRNA"/>
</dbReference>
<dbReference type="EMBL" id="U20949">
    <property type="protein sequence ID" value="AAA75316.1"/>
    <property type="molecule type" value="Genomic_DNA"/>
</dbReference>
<dbReference type="EMBL" id="U20949">
    <property type="protein sequence ID" value="AAA75317.1"/>
    <property type="molecule type" value="Genomic_DNA"/>
</dbReference>
<dbReference type="CCDS" id="CCDS26419.1">
    <molecule id="Q64287-1"/>
</dbReference>
<dbReference type="CCDS" id="CCDS84017.1">
    <molecule id="Q64287-2"/>
</dbReference>
<dbReference type="PIR" id="S57837">
    <property type="entry name" value="S57837"/>
</dbReference>
<dbReference type="RefSeq" id="NP_001334437.1">
    <molecule id="Q64287-2"/>
    <property type="nucleotide sequence ID" value="NM_001347508.1"/>
</dbReference>
<dbReference type="RefSeq" id="NP_038702.1">
    <molecule id="Q64287-1"/>
    <property type="nucleotide sequence ID" value="NM_013674.2"/>
</dbReference>
<dbReference type="PDB" id="5BVI">
    <property type="method" value="X-ray"/>
    <property type="resolution" value="2.60 A"/>
    <property type="chains" value="A/B=238-420"/>
</dbReference>
<dbReference type="PDBsum" id="5BVI"/>
<dbReference type="SMR" id="Q64287"/>
<dbReference type="BioGRID" id="200786">
    <property type="interactions" value="7"/>
</dbReference>
<dbReference type="CORUM" id="Q64287"/>
<dbReference type="DIP" id="DIP-59740N"/>
<dbReference type="FunCoup" id="Q64287">
    <property type="interactions" value="2017"/>
</dbReference>
<dbReference type="IntAct" id="Q64287">
    <property type="interactions" value="6"/>
</dbReference>
<dbReference type="STRING" id="10090.ENSMUSP00000021784"/>
<dbReference type="iPTMnet" id="Q64287"/>
<dbReference type="PhosphoSitePlus" id="Q64287"/>
<dbReference type="PaxDb" id="10090-ENSMUSP00000021784"/>
<dbReference type="ProteomicsDB" id="268993">
    <molecule id="Q64287-1"/>
</dbReference>
<dbReference type="ProteomicsDB" id="268994">
    <molecule id="Q64287-2"/>
</dbReference>
<dbReference type="Antibodypedia" id="1057">
    <property type="antibodies" value="707 antibodies from 47 providers"/>
</dbReference>
<dbReference type="DNASU" id="16364"/>
<dbReference type="Ensembl" id="ENSMUST00000021784.10">
    <molecule id="Q64287-1"/>
    <property type="protein sequence ID" value="ENSMUSP00000021784.3"/>
    <property type="gene ID" value="ENSMUSG00000021356.11"/>
</dbReference>
<dbReference type="Ensembl" id="ENSMUST00000110307.3">
    <molecule id="Q64287-2"/>
    <property type="protein sequence ID" value="ENSMUSP00000105936.2"/>
    <property type="gene ID" value="ENSMUSG00000021356.11"/>
</dbReference>
<dbReference type="GeneID" id="16364"/>
<dbReference type="KEGG" id="mmu:16364"/>
<dbReference type="UCSC" id="uc007pyz.1">
    <molecule id="Q64287-1"/>
    <property type="organism name" value="mouse"/>
</dbReference>
<dbReference type="AGR" id="MGI:1096873"/>
<dbReference type="CTD" id="3662"/>
<dbReference type="MGI" id="MGI:1096873">
    <property type="gene designation" value="Irf4"/>
</dbReference>
<dbReference type="VEuPathDB" id="HostDB:ENSMUSG00000021356"/>
<dbReference type="eggNOG" id="ENOG502QUE4">
    <property type="taxonomic scope" value="Eukaryota"/>
</dbReference>
<dbReference type="GeneTree" id="ENSGT00940000159059"/>
<dbReference type="HOGENOM" id="CLU_031544_1_1_1"/>
<dbReference type="InParanoid" id="Q64287"/>
<dbReference type="OMA" id="AKQLYYF"/>
<dbReference type="OrthoDB" id="8537190at2759"/>
<dbReference type="PhylomeDB" id="Q64287"/>
<dbReference type="TreeFam" id="TF328512"/>
<dbReference type="BioGRID-ORCS" id="16364">
    <property type="hits" value="2 hits in 81 CRISPR screens"/>
</dbReference>
<dbReference type="EvolutionaryTrace" id="Q64287"/>
<dbReference type="PRO" id="PR:Q64287"/>
<dbReference type="Proteomes" id="UP000000589">
    <property type="component" value="Chromosome 13"/>
</dbReference>
<dbReference type="RNAct" id="Q64287">
    <property type="molecule type" value="protein"/>
</dbReference>
<dbReference type="Bgee" id="ENSMUSG00000021356">
    <property type="expression patterns" value="Expressed in mesenteric lymph node and 56 other cell types or tissues"/>
</dbReference>
<dbReference type="ExpressionAtlas" id="Q64287">
    <property type="expression patterns" value="baseline and differential"/>
</dbReference>
<dbReference type="GO" id="GO:0005829">
    <property type="term" value="C:cytosol"/>
    <property type="evidence" value="ECO:0007669"/>
    <property type="project" value="Ensembl"/>
</dbReference>
<dbReference type="GO" id="GO:0005654">
    <property type="term" value="C:nucleoplasm"/>
    <property type="evidence" value="ECO:0007669"/>
    <property type="project" value="Ensembl"/>
</dbReference>
<dbReference type="GO" id="GO:0000786">
    <property type="term" value="C:nucleosome"/>
    <property type="evidence" value="ECO:0000314"/>
    <property type="project" value="MGI"/>
</dbReference>
<dbReference type="GO" id="GO:0000987">
    <property type="term" value="F:cis-regulatory region sequence-specific DNA binding"/>
    <property type="evidence" value="ECO:0000315"/>
    <property type="project" value="ARUK-UCL"/>
</dbReference>
<dbReference type="GO" id="GO:0001228">
    <property type="term" value="F:DNA-binding transcription activator activity, RNA polymerase II-specific"/>
    <property type="evidence" value="ECO:0007669"/>
    <property type="project" value="Ensembl"/>
</dbReference>
<dbReference type="GO" id="GO:0003700">
    <property type="term" value="F:DNA-binding transcription factor activity"/>
    <property type="evidence" value="ECO:0000314"/>
    <property type="project" value="UniProtKB"/>
</dbReference>
<dbReference type="GO" id="GO:0000978">
    <property type="term" value="F:RNA polymerase II cis-regulatory region sequence-specific DNA binding"/>
    <property type="evidence" value="ECO:0007669"/>
    <property type="project" value="Ensembl"/>
</dbReference>
<dbReference type="GO" id="GO:0043565">
    <property type="term" value="F:sequence-specific DNA binding"/>
    <property type="evidence" value="ECO:0000314"/>
    <property type="project" value="UniProtKB"/>
</dbReference>
<dbReference type="GO" id="GO:0003713">
    <property type="term" value="F:transcription coactivator activity"/>
    <property type="evidence" value="ECO:0000314"/>
    <property type="project" value="ARUK-UCL"/>
</dbReference>
<dbReference type="GO" id="GO:0006338">
    <property type="term" value="P:chromatin remodeling"/>
    <property type="evidence" value="ECO:0000315"/>
    <property type="project" value="MGI"/>
</dbReference>
<dbReference type="GO" id="GO:0042832">
    <property type="term" value="P:defense response to protozoan"/>
    <property type="evidence" value="ECO:0000315"/>
    <property type="project" value="UniProtKB"/>
</dbReference>
<dbReference type="GO" id="GO:0043011">
    <property type="term" value="P:myeloid dendritic cell differentiation"/>
    <property type="evidence" value="ECO:0000315"/>
    <property type="project" value="UniProtKB"/>
</dbReference>
<dbReference type="GO" id="GO:0034122">
    <property type="term" value="P:negative regulation of toll-like receptor signaling pathway"/>
    <property type="evidence" value="ECO:0000315"/>
    <property type="project" value="MGI"/>
</dbReference>
<dbReference type="GO" id="GO:0120162">
    <property type="term" value="P:positive regulation of cold-induced thermogenesis"/>
    <property type="evidence" value="ECO:0000315"/>
    <property type="project" value="YuBioLab"/>
</dbReference>
<dbReference type="GO" id="GO:0045893">
    <property type="term" value="P:positive regulation of DNA-templated transcription"/>
    <property type="evidence" value="ECO:0000314"/>
    <property type="project" value="ARUK-UCL"/>
</dbReference>
<dbReference type="GO" id="GO:0032733">
    <property type="term" value="P:positive regulation of interleukin-10 production"/>
    <property type="evidence" value="ECO:0000250"/>
    <property type="project" value="UniProtKB"/>
</dbReference>
<dbReference type="GO" id="GO:0032736">
    <property type="term" value="P:positive regulation of interleukin-13 production"/>
    <property type="evidence" value="ECO:0000250"/>
    <property type="project" value="UniProtKB"/>
</dbReference>
<dbReference type="GO" id="GO:0032743">
    <property type="term" value="P:positive regulation of interleukin-2 production"/>
    <property type="evidence" value="ECO:0000250"/>
    <property type="project" value="UniProtKB"/>
</dbReference>
<dbReference type="GO" id="GO:0032753">
    <property type="term" value="P:positive regulation of interleukin-4 production"/>
    <property type="evidence" value="ECO:0000250"/>
    <property type="project" value="UniProtKB"/>
</dbReference>
<dbReference type="GO" id="GO:0045944">
    <property type="term" value="P:positive regulation of transcription by RNA polymerase II"/>
    <property type="evidence" value="ECO:0000315"/>
    <property type="project" value="MGI"/>
</dbReference>
<dbReference type="GO" id="GO:0072540">
    <property type="term" value="P:T-helper 17 cell lineage commitment"/>
    <property type="evidence" value="ECO:0000315"/>
    <property type="project" value="UniProtKB"/>
</dbReference>
<dbReference type="CDD" id="cd00103">
    <property type="entry name" value="IRF"/>
    <property type="match status" value="1"/>
</dbReference>
<dbReference type="FunFam" id="1.10.10.10:FF:000041">
    <property type="entry name" value="Interferon regulatory factor 4"/>
    <property type="match status" value="1"/>
</dbReference>
<dbReference type="FunFam" id="2.60.200.10:FF:000005">
    <property type="entry name" value="Interferon regulatory factor 4 deltaE6"/>
    <property type="match status" value="1"/>
</dbReference>
<dbReference type="Gene3D" id="2.60.200.10">
    <property type="match status" value="1"/>
</dbReference>
<dbReference type="Gene3D" id="1.10.10.10">
    <property type="entry name" value="Winged helix-like DNA-binding domain superfamily/Winged helix DNA-binding domain"/>
    <property type="match status" value="1"/>
</dbReference>
<dbReference type="InterPro" id="IPR019817">
    <property type="entry name" value="Interferon_reg_fac_CS"/>
</dbReference>
<dbReference type="InterPro" id="IPR001346">
    <property type="entry name" value="Interferon_reg_fact_DNA-bd_dom"/>
</dbReference>
<dbReference type="InterPro" id="IPR019471">
    <property type="entry name" value="Interferon_reg_factor-3"/>
</dbReference>
<dbReference type="InterPro" id="IPR017855">
    <property type="entry name" value="SMAD-like_dom_sf"/>
</dbReference>
<dbReference type="InterPro" id="IPR008984">
    <property type="entry name" value="SMAD_FHA_dom_sf"/>
</dbReference>
<dbReference type="InterPro" id="IPR036388">
    <property type="entry name" value="WH-like_DNA-bd_sf"/>
</dbReference>
<dbReference type="InterPro" id="IPR036390">
    <property type="entry name" value="WH_DNA-bd_sf"/>
</dbReference>
<dbReference type="PANTHER" id="PTHR11949">
    <property type="entry name" value="INTERFERON REGULATORY FACTOR"/>
    <property type="match status" value="1"/>
</dbReference>
<dbReference type="PANTHER" id="PTHR11949:SF6">
    <property type="entry name" value="INTERFERON REGULATORY FACTOR 4"/>
    <property type="match status" value="1"/>
</dbReference>
<dbReference type="Pfam" id="PF00605">
    <property type="entry name" value="IRF"/>
    <property type="match status" value="1"/>
</dbReference>
<dbReference type="Pfam" id="PF10401">
    <property type="entry name" value="IRF-3"/>
    <property type="match status" value="1"/>
</dbReference>
<dbReference type="PRINTS" id="PR00267">
    <property type="entry name" value="INTFRNREGFCT"/>
</dbReference>
<dbReference type="SMART" id="SM00348">
    <property type="entry name" value="IRF"/>
    <property type="match status" value="1"/>
</dbReference>
<dbReference type="SMART" id="SM01243">
    <property type="entry name" value="IRF-3"/>
    <property type="match status" value="1"/>
</dbReference>
<dbReference type="SUPFAM" id="SSF49879">
    <property type="entry name" value="SMAD/FHA domain"/>
    <property type="match status" value="1"/>
</dbReference>
<dbReference type="SUPFAM" id="SSF46785">
    <property type="entry name" value="Winged helix' DNA-binding domain"/>
    <property type="match status" value="1"/>
</dbReference>
<dbReference type="PROSITE" id="PS00601">
    <property type="entry name" value="IRF_1"/>
    <property type="match status" value="1"/>
</dbReference>
<dbReference type="PROSITE" id="PS51507">
    <property type="entry name" value="IRF_2"/>
    <property type="match status" value="1"/>
</dbReference>
<reference key="1">
    <citation type="journal article" date="1995" name="Genes Dev.">
        <title>Pip, a novel IRF family member, is a lymphoid-specific, PU.1-dependent transcriptional activator.</title>
        <authorList>
            <person name="Eisenbeis C.F."/>
            <person name="Singh H."/>
            <person name="Storb U."/>
        </authorList>
    </citation>
    <scope>NUCLEOTIDE SEQUENCE [MRNA]</scope>
    <source>
        <strain>BALB/cJ</strain>
    </source>
</reference>
<reference key="2">
    <citation type="journal article" date="1995" name="Nucleic Acids Res.">
        <title>Molecular cloning of LSIRF, a lymphoid-specific member of the interferon regulatory factor family that binds the interferon-stimulated response element (ISRE).</title>
        <authorList>
            <person name="Matsuyama T."/>
            <person name="Grossman A."/>
            <person name="Mittruecker H.-W."/>
            <person name="Siderovski D.P."/>
            <person name="Kiefer F."/>
            <person name="Kawakami T."/>
            <person name="Richardson C.D."/>
            <person name="Taniguchi T."/>
            <person name="Yoshinaga S.K."/>
            <person name="Mak T.W."/>
        </authorList>
    </citation>
    <scope>NUCLEOTIDE SEQUENCE [GENOMIC DNA / MRNA]</scope>
    <source>
        <strain>129/SvJ</strain>
        <strain>C57BL/6J</strain>
        <tissue>Spleen</tissue>
    </source>
</reference>
<reference key="3">
    <citation type="submission" date="2009-01" db="UniProtKB">
        <authorList>
            <person name="Lubec G."/>
            <person name="Sunyer B."/>
            <person name="Chen W.-Q."/>
        </authorList>
    </citation>
    <scope>PROTEIN SEQUENCE OF 65-72</scope>
    <scope>IDENTIFICATION BY MASS SPECTROMETRY</scope>
    <source>
        <strain>OF1</strain>
        <tissue>Hippocampus</tissue>
    </source>
</reference>
<reference key="4">
    <citation type="journal article" date="2010" name="J. Clin. Invest.">
        <title>Phosphorylation of IRF4 by ROCK2 regulates IL-17 and IL-21 production and the development of autoimmunity in mice.</title>
        <authorList>
            <person name="Biswas P.S."/>
            <person name="Gupta S."/>
            <person name="Chang E."/>
            <person name="Song L."/>
            <person name="Stirzaker R.A."/>
            <person name="Liao J.K."/>
            <person name="Bhagat G."/>
            <person name="Pernis A.B."/>
        </authorList>
    </citation>
    <scope>PHOSPHORYLATION AT SER-446 AND SER-447</scope>
</reference>
<reference key="5">
    <citation type="journal article" date="2012" name="Nature">
        <title>Compensatory dendritic cell development mediated by BATF-IRF interactions.</title>
        <authorList>
            <person name="Tussiwand R."/>
            <person name="Lee W.L."/>
            <person name="Murphy T.L."/>
            <person name="Mashayekhi M."/>
            <person name="Kc W."/>
            <person name="Albring J.C."/>
            <person name="Satpathy A.T."/>
            <person name="Rotondo J.A."/>
            <person name="Edelson B.T."/>
            <person name="Kretzer N.M."/>
            <person name="Wu X."/>
            <person name="Weiss L.A."/>
            <person name="Glasmacher E."/>
            <person name="Li P."/>
            <person name="Liao W."/>
            <person name="Behnke M."/>
            <person name="Lam S.S."/>
            <person name="Aurthur C.T."/>
            <person name="Leonard W.J."/>
            <person name="Singh H."/>
            <person name="Stallings C.L."/>
            <person name="Sibley L.D."/>
            <person name="Schreiber R.D."/>
            <person name="Murphy K.M."/>
        </authorList>
    </citation>
    <scope>FUNCTION</scope>
    <scope>INTERACTION WITH BATF</scope>
</reference>
<reference key="6">
    <citation type="journal article" date="2012" name="Nature">
        <title>BATF-JUN is critical for IRF4-mediated transcription in T cells.</title>
        <authorList>
            <person name="Li P."/>
            <person name="Spolski R."/>
            <person name="Liao W."/>
            <person name="Wang L."/>
            <person name="Murphy T.L."/>
            <person name="Murphy K.M."/>
            <person name="Leonard W.J."/>
        </authorList>
    </citation>
    <scope>FUNCTION</scope>
    <scope>INTERACTION WITH BATF</scope>
</reference>
<reference key="7">
    <citation type="journal article" date="2012" name="Science">
        <title>A genomic regulatory element that directs assembly and function of immune-specific AP-1-IRF complexes.</title>
        <authorList>
            <person name="Glasmacher E."/>
            <person name="Agrawal S."/>
            <person name="Chang A.B."/>
            <person name="Murphy T.L."/>
            <person name="Zeng W."/>
            <person name="Vander Lugt B."/>
            <person name="Khan A.A."/>
            <person name="Ciofani M."/>
            <person name="Spooner C."/>
            <person name="Rutz S."/>
            <person name="Hackney J."/>
            <person name="Nurieva R."/>
            <person name="Escalante C.R."/>
            <person name="Ouyang W."/>
            <person name="Littman D.R."/>
            <person name="Murphy K.M."/>
            <person name="Singh H."/>
        </authorList>
    </citation>
    <scope>FUNCTION</scope>
    <scope>INTERACTION WITH BATF</scope>
</reference>
<reference key="8">
    <citation type="journal article" date="2015" name="Nat. Immunol.">
        <title>The receptor NLRP3 is a transcriptional regulator of TH2 differentiation.</title>
        <authorList>
            <person name="Bruchard M."/>
            <person name="Rebe C."/>
            <person name="Derangere V."/>
            <person name="Togbe D."/>
            <person name="Ryffel B."/>
            <person name="Boidot R."/>
            <person name="Humblin E."/>
            <person name="Hamman A."/>
            <person name="Chalmin F."/>
            <person name="Berger H."/>
            <person name="Chevriaux A."/>
            <person name="Limagne E."/>
            <person name="Apetoh L."/>
            <person name="Vegran F."/>
            <person name="Ghiringhelli F."/>
        </authorList>
    </citation>
    <scope>INTERACTION WITH NLRP3</scope>
</reference>
<reference key="9">
    <citation type="journal article" date="2023" name="Sci. Immunol.">
        <title>A multimorphic mutation in IRF4 causes human autosomal dominant combined immunodeficiency.</title>
        <authorList>
            <consortium name="IRF4 International Consortium"/>
            <person name="Fornes O."/>
            <person name="Jia A."/>
            <person name="Kuehn H.S."/>
            <person name="Min Q."/>
            <person name="Pannicke U."/>
            <person name="Schleussner N."/>
            <person name="Thouenon R."/>
            <person name="Yu Z."/>
            <person name="de Los Angeles Astbury M."/>
            <person name="Biggs C.M."/>
            <person name="Galicchio M."/>
            <person name="Garcia-Campos J.A."/>
            <person name="Gismondi S."/>
            <person name="Gonzalez Villarreal G."/>
            <person name="Hildebrand K.J."/>
            <person name="Hoenig M."/>
            <person name="Hou J."/>
            <person name="Moshous D."/>
            <person name="Pittaluga S."/>
            <person name="Qian X."/>
            <person name="Rozmus J."/>
            <person name="Schulz A.S."/>
            <person name="Staines-Boone A.T."/>
            <person name="Sun B."/>
            <person name="Sun J."/>
            <person name="Uwe S."/>
            <person name="Venegas-Montoya E."/>
            <person name="Wang W."/>
            <person name="Wang X."/>
            <person name="Ying W."/>
            <person name="Zhai X."/>
            <person name="Zhou Q."/>
            <person name="Akalin A."/>
            <person name="Andre I."/>
            <person name="Barth T.F.E."/>
            <person name="Baumann B."/>
            <person name="Bruestle A."/>
            <person name="Burgio G."/>
            <person name="Bustamante J.C."/>
            <person name="Casanova J.L."/>
            <person name="Casarotto M.G."/>
            <person name="Cavazzana M."/>
            <person name="Chentout L."/>
            <person name="Cockburn I.A."/>
            <person name="Costanza M."/>
            <person name="Cui C."/>
            <person name="Daumke O."/>
            <person name="Del Bel K.L."/>
            <person name="Eibel H."/>
            <person name="Feng X."/>
            <person name="Franke V."/>
            <person name="Gebhardt J.C.M."/>
            <person name="Goetz A."/>
            <person name="Grunwald S."/>
            <person name="Hoareau B."/>
            <person name="Hughes T.R."/>
            <person name="Jacobsen E.M."/>
            <person name="Janz M."/>
            <person name="Jolma A."/>
            <person name="Lagresle-Peyrou C."/>
            <person name="Lai N."/>
            <person name="Li Y."/>
            <person name="Lin S."/>
            <person name="Lu H.Y."/>
            <person name="Lugo-Reyes S.O."/>
            <person name="Meng X."/>
            <person name="Moeller P."/>
            <person name="Moreno-Corona N."/>
            <person name="Niemela J.E."/>
            <person name="Novakovsky G."/>
            <person name="Perez-Caraballo J.J."/>
            <person name="Picard C."/>
            <person name="Poggi L."/>
            <person name="Puig-Lombardi M.E."/>
            <person name="Randall K.L."/>
            <person name="Reisser A."/>
            <person name="Schmitt Y."/>
            <person name="Seneviratne S."/>
            <person name="Sharma M."/>
            <person name="Stoddard J."/>
            <person name="Sundararaj S."/>
            <person name="Sutton H."/>
            <person name="Tran L.Q."/>
            <person name="Wang Y."/>
            <person name="Wasserman W.W."/>
            <person name="Wen Z."/>
            <person name="Winkler W."/>
            <person name="Xiong E."/>
            <person name="Yang A.W.H."/>
            <person name="Yu M."/>
            <person name="Zhang L."/>
            <person name="Zhang H."/>
            <person name="Zhao Q."/>
            <person name="Zhen X."/>
            <person name="Enders A."/>
            <person name="Kracker S."/>
            <person name="Martinez-Barricarte R."/>
            <person name="Mathas S."/>
            <person name="Rosenzweig S.D."/>
            <person name="Schwarz K."/>
            <person name="Turvey S.E."/>
            <person name="Wang J.Y."/>
        </authorList>
    </citation>
    <scope>MUTAGENESIS OF THR-95</scope>
</reference>
<comment type="function">
    <text evidence="5 6 7">Transcriptional activator. Binds to the interferon-stimulated response element (ISRE) of the MHC class I promoter. Binds the immunoglobulin lambda light chain enhancer, together with PU.1. Probably plays a role in ISRE-targeted signal transduction mechanisms specific to lymphoid cells. Involved in CD8(+) dendritic cell differentiation by forming a complex with the BATF-JUNB heterodimer in immune cells, leading to recognition of AICE sequence (5'-TGAnTCA/GAAA-3'), an immune-specific regulatory element, followed by cooperative binding of BATF and IRF4 and activation of genes.</text>
</comment>
<comment type="subunit">
    <text evidence="1 2 5 6 7 8">Interacts with SPIB and DEF6 (By similarity). Interacts with the BATF-JUNB heterodimer. Interacts with BATF (via bZIP domain); the interaction is direct. Directly interacts with NLRP3 in the nucleus of Th2 cells; this interaction enhances IRF4 ability to bind to the IL4 promoter and is required for optimal IRF4-dependent IL4 transcription (PubMed:26098997). Interacts with SPI1 (By similarity).</text>
</comment>
<comment type="interaction">
    <interactant intactId="EBI-6398485">
        <id>Q64287</id>
    </interactant>
    <interactant intactId="EBI-6398523">
        <id>O35284</id>
        <label>Batf</label>
    </interactant>
    <organismsDiffer>false</organismsDiffer>
    <experiments>7</experiments>
</comment>
<comment type="interaction">
    <interactant intactId="EBI-6398485">
        <id>Q64287</id>
    </interactant>
    <interactant intactId="EBI-1371053">
        <id>O70343</id>
        <label>Ppargc1a</label>
    </interactant>
    <organismsDiffer>false</organismsDiffer>
    <experiments>6</experiments>
</comment>
<comment type="subcellular location">
    <subcellularLocation>
        <location evidence="2">Nucleus</location>
    </subcellularLocation>
    <subcellularLocation>
        <location evidence="2">Cytoplasm</location>
    </subcellularLocation>
</comment>
<comment type="alternative products">
    <event type="alternative splicing"/>
    <isoform>
        <id>Q64287-1</id>
        <name>1</name>
        <sequence type="displayed"/>
    </isoform>
    <isoform>
        <id>Q64287-2</id>
        <name>2</name>
        <sequence type="described" ref="VSP_002756"/>
    </isoform>
</comment>
<comment type="tissue specificity">
    <text>Lymphoid cells.</text>
</comment>
<comment type="induction">
    <text>Not induced by interferons.</text>
</comment>
<comment type="PTM">
    <text evidence="4">Phosphorylation by ROCK2 regulates IL-17 and IL-21 production.</text>
</comment>
<comment type="similarity">
    <text evidence="3">Belongs to the IRF family.</text>
</comment>
<evidence type="ECO:0000250" key="1"/>
<evidence type="ECO:0000250" key="2">
    <source>
        <dbReference type="UniProtKB" id="Q15306"/>
    </source>
</evidence>
<evidence type="ECO:0000255" key="3">
    <source>
        <dbReference type="PROSITE-ProRule" id="PRU00840"/>
    </source>
</evidence>
<evidence type="ECO:0000269" key="4">
    <source>
    </source>
</evidence>
<evidence type="ECO:0000269" key="5">
    <source>
    </source>
</evidence>
<evidence type="ECO:0000269" key="6">
    <source>
    </source>
</evidence>
<evidence type="ECO:0000269" key="7">
    <source>
    </source>
</evidence>
<evidence type="ECO:0000269" key="8">
    <source>
    </source>
</evidence>
<evidence type="ECO:0000269" key="9">
    <source>
    </source>
</evidence>
<evidence type="ECO:0000303" key="10">
    <source>
    </source>
</evidence>
<evidence type="ECO:0000303" key="11">
    <source>
    </source>
</evidence>
<evidence type="ECO:0000305" key="12"/>
<evidence type="ECO:0007829" key="13">
    <source>
        <dbReference type="PDB" id="5BVI"/>
    </source>
</evidence>